<gene>
    <name evidence="1" type="primary">dnaJ</name>
    <name type="ordered locus">FMG_0779</name>
</gene>
<feature type="chain" id="PRO_1000164262" description="Chaperone protein DnaJ">
    <location>
        <begin position="1"/>
        <end position="372"/>
    </location>
</feature>
<feature type="domain" description="J" evidence="1">
    <location>
        <begin position="3"/>
        <end position="68"/>
    </location>
</feature>
<feature type="repeat" description="CXXCXGXG motif">
    <location>
        <begin position="143"/>
        <end position="150"/>
    </location>
</feature>
<feature type="repeat" description="CXXCXGXG motif">
    <location>
        <begin position="160"/>
        <end position="167"/>
    </location>
</feature>
<feature type="repeat" description="CXXCXGXG motif">
    <location>
        <begin position="186"/>
        <end position="193"/>
    </location>
</feature>
<feature type="repeat" description="CXXCXGXG motif">
    <location>
        <begin position="200"/>
        <end position="207"/>
    </location>
</feature>
<feature type="zinc finger region" description="CR-type" evidence="1">
    <location>
        <begin position="130"/>
        <end position="212"/>
    </location>
</feature>
<feature type="binding site" evidence="1">
    <location>
        <position position="143"/>
    </location>
    <ligand>
        <name>Zn(2+)</name>
        <dbReference type="ChEBI" id="CHEBI:29105"/>
        <label>1</label>
    </ligand>
</feature>
<feature type="binding site" evidence="1">
    <location>
        <position position="146"/>
    </location>
    <ligand>
        <name>Zn(2+)</name>
        <dbReference type="ChEBI" id="CHEBI:29105"/>
        <label>1</label>
    </ligand>
</feature>
<feature type="binding site" evidence="1">
    <location>
        <position position="160"/>
    </location>
    <ligand>
        <name>Zn(2+)</name>
        <dbReference type="ChEBI" id="CHEBI:29105"/>
        <label>2</label>
    </ligand>
</feature>
<feature type="binding site" evidence="1">
    <location>
        <position position="163"/>
    </location>
    <ligand>
        <name>Zn(2+)</name>
        <dbReference type="ChEBI" id="CHEBI:29105"/>
        <label>2</label>
    </ligand>
</feature>
<feature type="binding site" evidence="1">
    <location>
        <position position="186"/>
    </location>
    <ligand>
        <name>Zn(2+)</name>
        <dbReference type="ChEBI" id="CHEBI:29105"/>
        <label>2</label>
    </ligand>
</feature>
<feature type="binding site" evidence="1">
    <location>
        <position position="189"/>
    </location>
    <ligand>
        <name>Zn(2+)</name>
        <dbReference type="ChEBI" id="CHEBI:29105"/>
        <label>2</label>
    </ligand>
</feature>
<feature type="binding site" evidence="1">
    <location>
        <position position="200"/>
    </location>
    <ligand>
        <name>Zn(2+)</name>
        <dbReference type="ChEBI" id="CHEBI:29105"/>
        <label>1</label>
    </ligand>
</feature>
<feature type="binding site" evidence="1">
    <location>
        <position position="203"/>
    </location>
    <ligand>
        <name>Zn(2+)</name>
        <dbReference type="ChEBI" id="CHEBI:29105"/>
        <label>1</label>
    </ligand>
</feature>
<reference key="1">
    <citation type="journal article" date="2008" name="DNA Res.">
        <title>Complete genome sequence of Finegoldia magna, an anaerobic opportunistic pathogen.</title>
        <authorList>
            <person name="Goto T."/>
            <person name="Yamashita A."/>
            <person name="Hirakawa H."/>
            <person name="Matsutani M."/>
            <person name="Todo K."/>
            <person name="Ohshima K."/>
            <person name="Toh H."/>
            <person name="Miyamoto K."/>
            <person name="Kuhara S."/>
            <person name="Hattori M."/>
            <person name="Shimizu T."/>
            <person name="Akimoto S."/>
        </authorList>
    </citation>
    <scope>NUCLEOTIDE SEQUENCE [LARGE SCALE GENOMIC DNA]</scope>
    <source>
        <strain>ATCC 29328 / DSM 20472 / WAL 2508</strain>
    </source>
</reference>
<organism>
    <name type="scientific">Finegoldia magna (strain ATCC 29328 / DSM 20472 / WAL 2508)</name>
    <name type="common">Peptostreptococcus magnus</name>
    <dbReference type="NCBI Taxonomy" id="334413"/>
    <lineage>
        <taxon>Bacteria</taxon>
        <taxon>Bacillati</taxon>
        <taxon>Bacillota</taxon>
        <taxon>Tissierellia</taxon>
        <taxon>Tissierellales</taxon>
        <taxon>Peptoniphilaceae</taxon>
        <taxon>Finegoldia</taxon>
    </lineage>
</organism>
<protein>
    <recommendedName>
        <fullName evidence="1">Chaperone protein DnaJ</fullName>
    </recommendedName>
</protein>
<dbReference type="EMBL" id="AP008971">
    <property type="protein sequence ID" value="BAG08197.1"/>
    <property type="molecule type" value="Genomic_DNA"/>
</dbReference>
<dbReference type="RefSeq" id="WP_012290622.1">
    <property type="nucleotide sequence ID" value="NC_010376.1"/>
</dbReference>
<dbReference type="SMR" id="B0S1F7"/>
<dbReference type="STRING" id="334413.FMG_0779"/>
<dbReference type="KEGG" id="fma:FMG_0779"/>
<dbReference type="eggNOG" id="COG0484">
    <property type="taxonomic scope" value="Bacteria"/>
</dbReference>
<dbReference type="HOGENOM" id="CLU_017633_0_7_9"/>
<dbReference type="Proteomes" id="UP000001319">
    <property type="component" value="Chromosome"/>
</dbReference>
<dbReference type="GO" id="GO:0005737">
    <property type="term" value="C:cytoplasm"/>
    <property type="evidence" value="ECO:0007669"/>
    <property type="project" value="UniProtKB-SubCell"/>
</dbReference>
<dbReference type="GO" id="GO:0005524">
    <property type="term" value="F:ATP binding"/>
    <property type="evidence" value="ECO:0007669"/>
    <property type="project" value="InterPro"/>
</dbReference>
<dbReference type="GO" id="GO:0031072">
    <property type="term" value="F:heat shock protein binding"/>
    <property type="evidence" value="ECO:0007669"/>
    <property type="project" value="InterPro"/>
</dbReference>
<dbReference type="GO" id="GO:0051082">
    <property type="term" value="F:unfolded protein binding"/>
    <property type="evidence" value="ECO:0007669"/>
    <property type="project" value="UniProtKB-UniRule"/>
</dbReference>
<dbReference type="GO" id="GO:0008270">
    <property type="term" value="F:zinc ion binding"/>
    <property type="evidence" value="ECO:0007669"/>
    <property type="project" value="UniProtKB-UniRule"/>
</dbReference>
<dbReference type="GO" id="GO:0051085">
    <property type="term" value="P:chaperone cofactor-dependent protein refolding"/>
    <property type="evidence" value="ECO:0007669"/>
    <property type="project" value="TreeGrafter"/>
</dbReference>
<dbReference type="GO" id="GO:0006260">
    <property type="term" value="P:DNA replication"/>
    <property type="evidence" value="ECO:0007669"/>
    <property type="project" value="UniProtKB-KW"/>
</dbReference>
<dbReference type="GO" id="GO:0042026">
    <property type="term" value="P:protein refolding"/>
    <property type="evidence" value="ECO:0007669"/>
    <property type="project" value="TreeGrafter"/>
</dbReference>
<dbReference type="GO" id="GO:0009408">
    <property type="term" value="P:response to heat"/>
    <property type="evidence" value="ECO:0007669"/>
    <property type="project" value="InterPro"/>
</dbReference>
<dbReference type="CDD" id="cd06257">
    <property type="entry name" value="DnaJ"/>
    <property type="match status" value="1"/>
</dbReference>
<dbReference type="CDD" id="cd10747">
    <property type="entry name" value="DnaJ_C"/>
    <property type="match status" value="1"/>
</dbReference>
<dbReference type="CDD" id="cd10719">
    <property type="entry name" value="DnaJ_zf"/>
    <property type="match status" value="1"/>
</dbReference>
<dbReference type="FunFam" id="2.60.260.20:FF:000005">
    <property type="entry name" value="Chaperone protein dnaJ 1, mitochondrial"/>
    <property type="match status" value="1"/>
</dbReference>
<dbReference type="FunFam" id="2.10.230.10:FF:000002">
    <property type="entry name" value="Molecular chaperone DnaJ"/>
    <property type="match status" value="1"/>
</dbReference>
<dbReference type="Gene3D" id="1.10.287.110">
    <property type="entry name" value="DnaJ domain"/>
    <property type="match status" value="1"/>
</dbReference>
<dbReference type="Gene3D" id="2.10.230.10">
    <property type="entry name" value="Heat shock protein DnaJ, cysteine-rich domain"/>
    <property type="match status" value="1"/>
</dbReference>
<dbReference type="Gene3D" id="2.60.260.20">
    <property type="entry name" value="Urease metallochaperone UreE, N-terminal domain"/>
    <property type="match status" value="2"/>
</dbReference>
<dbReference type="HAMAP" id="MF_01152">
    <property type="entry name" value="DnaJ"/>
    <property type="match status" value="1"/>
</dbReference>
<dbReference type="InterPro" id="IPR012724">
    <property type="entry name" value="DnaJ"/>
</dbReference>
<dbReference type="InterPro" id="IPR002939">
    <property type="entry name" value="DnaJ_C"/>
</dbReference>
<dbReference type="InterPro" id="IPR001623">
    <property type="entry name" value="DnaJ_domain"/>
</dbReference>
<dbReference type="InterPro" id="IPR018253">
    <property type="entry name" value="DnaJ_domain_CS"/>
</dbReference>
<dbReference type="InterPro" id="IPR008971">
    <property type="entry name" value="HSP40/DnaJ_pept-bd"/>
</dbReference>
<dbReference type="InterPro" id="IPR001305">
    <property type="entry name" value="HSP_DnaJ_Cys-rich_dom"/>
</dbReference>
<dbReference type="InterPro" id="IPR036410">
    <property type="entry name" value="HSP_DnaJ_Cys-rich_dom_sf"/>
</dbReference>
<dbReference type="InterPro" id="IPR036869">
    <property type="entry name" value="J_dom_sf"/>
</dbReference>
<dbReference type="NCBIfam" id="TIGR02349">
    <property type="entry name" value="DnaJ_bact"/>
    <property type="match status" value="1"/>
</dbReference>
<dbReference type="NCBIfam" id="NF008035">
    <property type="entry name" value="PRK10767.1"/>
    <property type="match status" value="1"/>
</dbReference>
<dbReference type="PANTHER" id="PTHR43096:SF10">
    <property type="entry name" value="CHAPERONE PROTEIN DNAJ A6, CHLOROPLASTIC"/>
    <property type="match status" value="1"/>
</dbReference>
<dbReference type="PANTHER" id="PTHR43096">
    <property type="entry name" value="DNAJ HOMOLOG 1, MITOCHONDRIAL-RELATED"/>
    <property type="match status" value="1"/>
</dbReference>
<dbReference type="Pfam" id="PF00226">
    <property type="entry name" value="DnaJ"/>
    <property type="match status" value="1"/>
</dbReference>
<dbReference type="Pfam" id="PF01556">
    <property type="entry name" value="DnaJ_C"/>
    <property type="match status" value="1"/>
</dbReference>
<dbReference type="Pfam" id="PF00684">
    <property type="entry name" value="DnaJ_CXXCXGXG"/>
    <property type="match status" value="1"/>
</dbReference>
<dbReference type="PRINTS" id="PR00625">
    <property type="entry name" value="JDOMAIN"/>
</dbReference>
<dbReference type="SMART" id="SM00271">
    <property type="entry name" value="DnaJ"/>
    <property type="match status" value="1"/>
</dbReference>
<dbReference type="SUPFAM" id="SSF46565">
    <property type="entry name" value="Chaperone J-domain"/>
    <property type="match status" value="1"/>
</dbReference>
<dbReference type="SUPFAM" id="SSF57938">
    <property type="entry name" value="DnaJ/Hsp40 cysteine-rich domain"/>
    <property type="match status" value="1"/>
</dbReference>
<dbReference type="SUPFAM" id="SSF49493">
    <property type="entry name" value="HSP40/DnaJ peptide-binding domain"/>
    <property type="match status" value="2"/>
</dbReference>
<dbReference type="PROSITE" id="PS00636">
    <property type="entry name" value="DNAJ_1"/>
    <property type="match status" value="1"/>
</dbReference>
<dbReference type="PROSITE" id="PS50076">
    <property type="entry name" value="DNAJ_2"/>
    <property type="match status" value="1"/>
</dbReference>
<dbReference type="PROSITE" id="PS51188">
    <property type="entry name" value="ZF_CR"/>
    <property type="match status" value="1"/>
</dbReference>
<comment type="function">
    <text evidence="1">Participates actively in the response to hyperosmotic and heat shock by preventing the aggregation of stress-denatured proteins and by disaggregating proteins, also in an autonomous, DnaK-independent fashion. Unfolded proteins bind initially to DnaJ; upon interaction with the DnaJ-bound protein, DnaK hydrolyzes its bound ATP, resulting in the formation of a stable complex. GrpE releases ADP from DnaK; ATP binding to DnaK triggers the release of the substrate protein, thus completing the reaction cycle. Several rounds of ATP-dependent interactions between DnaJ, DnaK and GrpE are required for fully efficient folding. Also involved, together with DnaK and GrpE, in the DNA replication of plasmids through activation of initiation proteins.</text>
</comment>
<comment type="cofactor">
    <cofactor evidence="1">
        <name>Zn(2+)</name>
        <dbReference type="ChEBI" id="CHEBI:29105"/>
    </cofactor>
    <text evidence="1">Binds 2 Zn(2+) ions per monomer.</text>
</comment>
<comment type="subunit">
    <text evidence="1">Homodimer.</text>
</comment>
<comment type="subcellular location">
    <subcellularLocation>
        <location evidence="1">Cytoplasm</location>
    </subcellularLocation>
</comment>
<comment type="domain">
    <text evidence="1">The J domain is necessary and sufficient to stimulate DnaK ATPase activity. Zinc center 1 plays an important role in the autonomous, DnaK-independent chaperone activity of DnaJ. Zinc center 2 is essential for interaction with DnaK and for DnaJ activity.</text>
</comment>
<comment type="similarity">
    <text evidence="1">Belongs to the DnaJ family.</text>
</comment>
<proteinExistence type="inferred from homology"/>
<evidence type="ECO:0000255" key="1">
    <source>
        <dbReference type="HAMAP-Rule" id="MF_01152"/>
    </source>
</evidence>
<sequence>MKNLYEILEVNENATQEEIKKSYRRLAKKYHPDINSGDSEAENKFKEINGAYEVLGDKEKRKKYDMYGDRMFDQGTGGGFSDFGDIFGDFFGDIFGGFSSRSYSKNPNAPRKGSNIQVELEIDFEDSINGTKKEISYKKKVKCHVCNGDGAKPGTEKRQCEKCHGTGIINDTKRTPFGIFTQQSECDKCHGEGYVIDEKCENCKGKGYEIERKTINITIPKGINNGAIMSVKGEGNDGENNGSPGDLYVIIKIREHEFFKRINNDIVFDMPITYAQAVLGSKIEVPTLDGIEEFELPEGTQPNTTFKLKSKGVPYLNSNSRGDILFTVKIIVPKKINKEQKEKLIKFSESMNQELNVNEKKSIFDRIKDMFE</sequence>
<name>DNAJ_FINM2</name>
<keyword id="KW-0143">Chaperone</keyword>
<keyword id="KW-0963">Cytoplasm</keyword>
<keyword id="KW-0235">DNA replication</keyword>
<keyword id="KW-0479">Metal-binding</keyword>
<keyword id="KW-1185">Reference proteome</keyword>
<keyword id="KW-0677">Repeat</keyword>
<keyword id="KW-0346">Stress response</keyword>
<keyword id="KW-0862">Zinc</keyword>
<keyword id="KW-0863">Zinc-finger</keyword>
<accession>B0S1F7</accession>